<name>GLGS1_ORYSJ</name>
<sequence length="500" mass="54845">MAMMAMGAASWAPIPAPARAAAAFYPGRDLAAARRRRGAAARRPFVFTPRAVSDSRSSQTCLDPDASTSVLGIILGGGAGTRLYPLTKKRAKPAVPLGANYRLIDIPVSNCLNSNVSKIYVLTQFNSASLNRHLSRAYGNNIGGYKNEGFVEVLAAQQSPENPNWFQGTADAVRQYLWLFEEHNVMEFLILAGDHLYRMDYQKFIQAHRETNADITVAALPMDEERATAFGLMKIDDEGRIIEFAEKPKGEKLKSMMVDTTILGLDTERAKELPYIASMGIYVFSKDVMLKLLRQNFPAANDFGSEVIPGATEIGMRVQAYLYDGYWEDIGTIEAFYNANLGITKKPVPDFSFYDRSAAIYTQPRYLPPSKVLDADVTDSVIGEGCVIRHCTINHSVVGLRSCISEGAVIEDSLLMGADYYETETDKKALSETGGIPIGIGKNAHIRKAIIDKNARIGENVKIINVDNIQEASRETDGYFIKSGIVTVIKDALIPSGTVI</sequence>
<protein>
    <recommendedName>
        <fullName evidence="6">Glucose-1-phosphate adenylyltransferase small subunit 1, chloroplastic/amyloplastic</fullName>
        <shortName evidence="5">OsAGPS1</shortName>
        <shortName evidence="4">OsAPS1</shortName>
        <ecNumber evidence="7">2.7.7.27</ecNumber>
    </recommendedName>
    <alternativeName>
        <fullName evidence="6">ADP-glucose pyrophosphorylase AGPS1</fullName>
    </alternativeName>
    <alternativeName>
        <fullName evidence="6">ADP-glucose synthase AGPS1</fullName>
    </alternativeName>
</protein>
<feature type="transit peptide" description="Chloroplast" evidence="1">
    <location>
        <begin position="1"/>
        <end position="50"/>
    </location>
</feature>
<feature type="chain" id="PRO_0000441123" description="Glucose-1-phosphate adenylyltransferase small subunit 1, chloroplastic/amyloplastic">
    <location>
        <begin position="51"/>
        <end position="500"/>
    </location>
</feature>
<organism>
    <name type="scientific">Oryza sativa subsp. japonica</name>
    <name type="common">Rice</name>
    <dbReference type="NCBI Taxonomy" id="39947"/>
    <lineage>
        <taxon>Eukaryota</taxon>
        <taxon>Viridiplantae</taxon>
        <taxon>Streptophyta</taxon>
        <taxon>Embryophyta</taxon>
        <taxon>Tracheophyta</taxon>
        <taxon>Spermatophyta</taxon>
        <taxon>Magnoliopsida</taxon>
        <taxon>Liliopsida</taxon>
        <taxon>Poales</taxon>
        <taxon>Poaceae</taxon>
        <taxon>BOP clade</taxon>
        <taxon>Oryzoideae</taxon>
        <taxon>Oryzeae</taxon>
        <taxon>Oryzinae</taxon>
        <taxon>Oryza</taxon>
        <taxon>Oryza sativa</taxon>
    </lineage>
</organism>
<gene>
    <name evidence="5" type="primary">AGPS1</name>
    <name evidence="4" type="synonym">APS1</name>
    <name evidence="10" type="ordered locus">Os09g0298200</name>
    <name evidence="6" type="ordered locus">LOC_Os09g12660</name>
    <name evidence="8" type="ORF">OJ1381_H04.16</name>
    <name evidence="11" type="ORF">OsJ_28755</name>
    <name evidence="9" type="ORF">P0592C05.40</name>
</gene>
<proteinExistence type="evidence at protein level"/>
<accession>Q69T99</accession>
<keyword id="KW-0021">Allosteric enzyme</keyword>
<keyword id="KW-0035">Amyloplast</keyword>
<keyword id="KW-0067">ATP-binding</keyword>
<keyword id="KW-0150">Chloroplast</keyword>
<keyword id="KW-0547">Nucleotide-binding</keyword>
<keyword id="KW-0548">Nucleotidyltransferase</keyword>
<keyword id="KW-0934">Plastid</keyword>
<keyword id="KW-1185">Reference proteome</keyword>
<keyword id="KW-0750">Starch biosynthesis</keyword>
<keyword id="KW-0808">Transferase</keyword>
<keyword id="KW-0809">Transit peptide</keyword>
<reference key="1">
    <citation type="journal article" date="2009" name="Proc. Natl. Acad. Sci. U.S.A.">
        <title>Allelic diversities in rice starch biosynthesis lead to a diverse array of rice eating and cooking qualities.</title>
        <authorList>
            <person name="Tian Z."/>
            <person name="Qian Q."/>
            <person name="Liu Q."/>
            <person name="Yan M."/>
            <person name="Liu X."/>
            <person name="Yan C."/>
            <person name="Liu G."/>
            <person name="Gao Z."/>
            <person name="Tang S."/>
            <person name="Zeng D."/>
            <person name="Wang Y."/>
            <person name="Yu J."/>
            <person name="Gu M."/>
            <person name="Li J."/>
        </authorList>
    </citation>
    <scope>NUCLEOTIDE SEQUENCE [GENOMIC DNA]</scope>
</reference>
<reference key="2">
    <citation type="journal article" date="2005" name="Nature">
        <title>The map-based sequence of the rice genome.</title>
        <authorList>
            <consortium name="International rice genome sequencing project (IRGSP)"/>
        </authorList>
    </citation>
    <scope>NUCLEOTIDE SEQUENCE [LARGE SCALE GENOMIC DNA]</scope>
    <source>
        <strain>cv. Nipponbare</strain>
    </source>
</reference>
<reference key="3">
    <citation type="journal article" date="2008" name="Nucleic Acids Res.">
        <title>The rice annotation project database (RAP-DB): 2008 update.</title>
        <authorList>
            <consortium name="The rice annotation project (RAP)"/>
        </authorList>
    </citation>
    <scope>GENOME REANNOTATION</scope>
    <source>
        <strain>cv. Nipponbare</strain>
    </source>
</reference>
<reference key="4">
    <citation type="journal article" date="2013" name="Rice">
        <title>Improvement of the Oryza sativa Nipponbare reference genome using next generation sequence and optical map data.</title>
        <authorList>
            <person name="Kawahara Y."/>
            <person name="de la Bastide M."/>
            <person name="Hamilton J.P."/>
            <person name="Kanamori H."/>
            <person name="McCombie W.R."/>
            <person name="Ouyang S."/>
            <person name="Schwartz D.C."/>
            <person name="Tanaka T."/>
            <person name="Wu J."/>
            <person name="Zhou S."/>
            <person name="Childs K.L."/>
            <person name="Davidson R.M."/>
            <person name="Lin H."/>
            <person name="Quesada-Ocampo L."/>
            <person name="Vaillancourt B."/>
            <person name="Sakai H."/>
            <person name="Lee S.S."/>
            <person name="Kim J."/>
            <person name="Numa H."/>
            <person name="Itoh T."/>
            <person name="Buell C.R."/>
            <person name="Matsumoto T."/>
        </authorList>
    </citation>
    <scope>GENOME REANNOTATION</scope>
    <source>
        <strain>cv. Nipponbare</strain>
    </source>
</reference>
<reference key="5">
    <citation type="journal article" date="2005" name="PLoS Biol.">
        <title>The genomes of Oryza sativa: a history of duplications.</title>
        <authorList>
            <person name="Yu J."/>
            <person name="Wang J."/>
            <person name="Lin W."/>
            <person name="Li S."/>
            <person name="Li H."/>
            <person name="Zhou J."/>
            <person name="Ni P."/>
            <person name="Dong W."/>
            <person name="Hu S."/>
            <person name="Zeng C."/>
            <person name="Zhang J."/>
            <person name="Zhang Y."/>
            <person name="Li R."/>
            <person name="Xu Z."/>
            <person name="Li S."/>
            <person name="Li X."/>
            <person name="Zheng H."/>
            <person name="Cong L."/>
            <person name="Lin L."/>
            <person name="Yin J."/>
            <person name="Geng J."/>
            <person name="Li G."/>
            <person name="Shi J."/>
            <person name="Liu J."/>
            <person name="Lv H."/>
            <person name="Li J."/>
            <person name="Wang J."/>
            <person name="Deng Y."/>
            <person name="Ran L."/>
            <person name="Shi X."/>
            <person name="Wang X."/>
            <person name="Wu Q."/>
            <person name="Li C."/>
            <person name="Ren X."/>
            <person name="Wang J."/>
            <person name="Wang X."/>
            <person name="Li D."/>
            <person name="Liu D."/>
            <person name="Zhang X."/>
            <person name="Ji Z."/>
            <person name="Zhao W."/>
            <person name="Sun Y."/>
            <person name="Zhang Z."/>
            <person name="Bao J."/>
            <person name="Han Y."/>
            <person name="Dong L."/>
            <person name="Ji J."/>
            <person name="Chen P."/>
            <person name="Wu S."/>
            <person name="Liu J."/>
            <person name="Xiao Y."/>
            <person name="Bu D."/>
            <person name="Tan J."/>
            <person name="Yang L."/>
            <person name="Ye C."/>
            <person name="Zhang J."/>
            <person name="Xu J."/>
            <person name="Zhou Y."/>
            <person name="Yu Y."/>
            <person name="Zhang B."/>
            <person name="Zhuang S."/>
            <person name="Wei H."/>
            <person name="Liu B."/>
            <person name="Lei M."/>
            <person name="Yu H."/>
            <person name="Li Y."/>
            <person name="Xu H."/>
            <person name="Wei S."/>
            <person name="He X."/>
            <person name="Fang L."/>
            <person name="Zhang Z."/>
            <person name="Zhang Y."/>
            <person name="Huang X."/>
            <person name="Su Z."/>
            <person name="Tong W."/>
            <person name="Li J."/>
            <person name="Tong Z."/>
            <person name="Li S."/>
            <person name="Ye J."/>
            <person name="Wang L."/>
            <person name="Fang L."/>
            <person name="Lei T."/>
            <person name="Chen C.-S."/>
            <person name="Chen H.-C."/>
            <person name="Xu Z."/>
            <person name="Li H."/>
            <person name="Huang H."/>
            <person name="Zhang F."/>
            <person name="Xu H."/>
            <person name="Li N."/>
            <person name="Zhao C."/>
            <person name="Li S."/>
            <person name="Dong L."/>
            <person name="Huang Y."/>
            <person name="Li L."/>
            <person name="Xi Y."/>
            <person name="Qi Q."/>
            <person name="Li W."/>
            <person name="Zhang B."/>
            <person name="Hu W."/>
            <person name="Zhang Y."/>
            <person name="Tian X."/>
            <person name="Jiao Y."/>
            <person name="Liang X."/>
            <person name="Jin J."/>
            <person name="Gao L."/>
            <person name="Zheng W."/>
            <person name="Hao B."/>
            <person name="Liu S.-M."/>
            <person name="Wang W."/>
            <person name="Yuan L."/>
            <person name="Cao M."/>
            <person name="McDermott J."/>
            <person name="Samudrala R."/>
            <person name="Wang J."/>
            <person name="Wong G.K.-S."/>
            <person name="Yang H."/>
        </authorList>
    </citation>
    <scope>NUCLEOTIDE SEQUENCE [LARGE SCALE GENOMIC DNA]</scope>
    <source>
        <strain>cv. Nipponbare</strain>
    </source>
</reference>
<reference key="6">
    <citation type="journal article" date="2003" name="Science">
        <title>Collection, mapping, and annotation of over 28,000 cDNA clones from japonica rice.</title>
        <authorList>
            <consortium name="The rice full-length cDNA consortium"/>
        </authorList>
    </citation>
    <scope>NUCLEOTIDE SEQUENCE [LARGE SCALE MRNA]</scope>
    <source>
        <strain>cv. Nipponbare</strain>
    </source>
</reference>
<reference key="7">
    <citation type="journal article" date="2005" name="Plant Cell Physiol.">
        <title>Gene expression of ADP-glucose pyrophosphorylase and starch contents in rice cultured cells are cooperatively regulated by sucrose and ABA.</title>
        <authorList>
            <person name="Akihiro T."/>
            <person name="Mizuno K."/>
            <person name="Fujimura T."/>
        </authorList>
    </citation>
    <scope>TISSUE SPECIFICITY</scope>
    <scope>DEVELOPMENTAL STAGE</scope>
    <scope>INDUCTION</scope>
</reference>
<reference key="8">
    <citation type="journal article" date="2007" name="Plant Mol. Biol.">
        <title>Identification of the ADP-glucose pyrophosphorylase isoforms essential for starch synthesis in the leaf and seed endosperm of rice (Oryza sativa L.).</title>
        <authorList>
            <person name="Lee S.K."/>
            <person name="Hwang S.K."/>
            <person name="Han M."/>
            <person name="Eom J.S."/>
            <person name="Kang H.G."/>
            <person name="Han Y."/>
            <person name="Choi S.B."/>
            <person name="Cho M.H."/>
            <person name="Bhoo S.H."/>
            <person name="An G."/>
            <person name="Hahn T.R."/>
            <person name="Okita T.W."/>
            <person name="Jeon J.S."/>
        </authorList>
    </citation>
    <scope>FUNCTION</scope>
    <scope>CATALYTIC ACTIVITY</scope>
    <scope>ACTIVITY REGULATION</scope>
    <scope>SUBUNIT</scope>
    <scope>SUBCELLULAR LOCATION</scope>
</reference>
<evidence type="ECO:0000255" key="1"/>
<evidence type="ECO:0000269" key="2">
    <source>
    </source>
</evidence>
<evidence type="ECO:0000269" key="3">
    <source>
    </source>
</evidence>
<evidence type="ECO:0000303" key="4">
    <source>
    </source>
</evidence>
<evidence type="ECO:0000303" key="5">
    <source>
    </source>
</evidence>
<evidence type="ECO:0000305" key="6"/>
<evidence type="ECO:0000305" key="7">
    <source>
    </source>
</evidence>
<evidence type="ECO:0000312" key="8">
    <source>
        <dbReference type="EMBL" id="BAD32986.1"/>
    </source>
</evidence>
<evidence type="ECO:0000312" key="9">
    <source>
        <dbReference type="EMBL" id="BAD33225.1"/>
    </source>
</evidence>
<evidence type="ECO:0000312" key="10">
    <source>
        <dbReference type="EMBL" id="BAF24722.1"/>
    </source>
</evidence>
<evidence type="ECO:0000312" key="11">
    <source>
        <dbReference type="EMBL" id="EEE69398.1"/>
    </source>
</evidence>
<dbReference type="EC" id="2.7.7.27" evidence="7"/>
<dbReference type="EMBL" id="GQ150843">
    <property type="protein sequence ID" value="ACY56058.1"/>
    <property type="molecule type" value="Genomic_DNA"/>
</dbReference>
<dbReference type="EMBL" id="GQ150844">
    <property type="protein sequence ID" value="ACY56059.1"/>
    <property type="molecule type" value="Genomic_DNA"/>
</dbReference>
<dbReference type="EMBL" id="GQ150845">
    <property type="protein sequence ID" value="ACY56060.1"/>
    <property type="molecule type" value="Genomic_DNA"/>
</dbReference>
<dbReference type="EMBL" id="GQ150846">
    <property type="protein sequence ID" value="ACY56061.1"/>
    <property type="molecule type" value="Genomic_DNA"/>
</dbReference>
<dbReference type="EMBL" id="GQ150848">
    <property type="protein sequence ID" value="ACY56063.1"/>
    <property type="molecule type" value="Genomic_DNA"/>
</dbReference>
<dbReference type="EMBL" id="AP004011">
    <property type="protein sequence ID" value="BAD32986.1"/>
    <property type="molecule type" value="Genomic_DNA"/>
</dbReference>
<dbReference type="EMBL" id="AP004756">
    <property type="protein sequence ID" value="BAD33225.1"/>
    <property type="molecule type" value="Genomic_DNA"/>
</dbReference>
<dbReference type="EMBL" id="AP008215">
    <property type="protein sequence ID" value="BAF24722.1"/>
    <property type="molecule type" value="Genomic_DNA"/>
</dbReference>
<dbReference type="EMBL" id="AP014965">
    <property type="protein sequence ID" value="BAT07326.1"/>
    <property type="molecule type" value="Genomic_DNA"/>
</dbReference>
<dbReference type="EMBL" id="CM000146">
    <property type="protein sequence ID" value="EEE69398.1"/>
    <property type="molecule type" value="Genomic_DNA"/>
</dbReference>
<dbReference type="EMBL" id="AK060270">
    <property type="protein sequence ID" value="BAG87387.1"/>
    <property type="molecule type" value="mRNA"/>
</dbReference>
<dbReference type="EMBL" id="AK073146">
    <property type="protein sequence ID" value="BAG93309.1"/>
    <property type="molecule type" value="mRNA"/>
</dbReference>
<dbReference type="SMR" id="Q69T99"/>
<dbReference type="FunCoup" id="Q69T99">
    <property type="interactions" value="782"/>
</dbReference>
<dbReference type="STRING" id="39947.Q69T99"/>
<dbReference type="PaxDb" id="39947-Q69T99"/>
<dbReference type="EnsemblPlants" id="Os09t0298200-01">
    <property type="protein sequence ID" value="Os09t0298200-01"/>
    <property type="gene ID" value="Os09g0298200"/>
</dbReference>
<dbReference type="EnsemblPlants" id="Os09t0298200-02">
    <property type="protein sequence ID" value="Os09t0298200-02"/>
    <property type="gene ID" value="Os09g0298200"/>
</dbReference>
<dbReference type="GeneID" id="4346656"/>
<dbReference type="Gramene" id="Os09t0298200-01">
    <property type="protein sequence ID" value="Os09t0298200-01"/>
    <property type="gene ID" value="Os09g0298200"/>
</dbReference>
<dbReference type="Gramene" id="Os09t0298200-02">
    <property type="protein sequence ID" value="Os09t0298200-02"/>
    <property type="gene ID" value="Os09g0298200"/>
</dbReference>
<dbReference type="KEGG" id="dosa:Os09g0298200"/>
<dbReference type="KEGG" id="osa:4346656"/>
<dbReference type="eggNOG" id="KOG1322">
    <property type="taxonomic scope" value="Eukaryota"/>
</dbReference>
<dbReference type="HOGENOM" id="CLU_029499_14_4_1"/>
<dbReference type="InParanoid" id="Q69T99"/>
<dbReference type="OMA" id="GRNAHIR"/>
<dbReference type="OrthoDB" id="1733332at2759"/>
<dbReference type="BRENDA" id="2.7.7.27">
    <property type="organism ID" value="4460"/>
</dbReference>
<dbReference type="PlantReactome" id="R-OSA-1119477">
    <property type="pathway name" value="Starch biosynthesis"/>
</dbReference>
<dbReference type="UniPathway" id="UPA00152"/>
<dbReference type="Proteomes" id="UP000000763">
    <property type="component" value="Chromosome 9"/>
</dbReference>
<dbReference type="Proteomes" id="UP000007752">
    <property type="component" value="Chromosome 9"/>
</dbReference>
<dbReference type="Proteomes" id="UP000059680">
    <property type="component" value="Chromosome 9"/>
</dbReference>
<dbReference type="GO" id="GO:0009501">
    <property type="term" value="C:amyloplast"/>
    <property type="evidence" value="ECO:0007669"/>
    <property type="project" value="UniProtKB-SubCell"/>
</dbReference>
<dbReference type="GO" id="GO:0009507">
    <property type="term" value="C:chloroplast"/>
    <property type="evidence" value="ECO:0007669"/>
    <property type="project" value="UniProtKB-SubCell"/>
</dbReference>
<dbReference type="GO" id="GO:0005524">
    <property type="term" value="F:ATP binding"/>
    <property type="evidence" value="ECO:0007669"/>
    <property type="project" value="UniProtKB-KW"/>
</dbReference>
<dbReference type="GO" id="GO:0008878">
    <property type="term" value="F:glucose-1-phosphate adenylyltransferase activity"/>
    <property type="evidence" value="ECO:0007669"/>
    <property type="project" value="UniProtKB-EC"/>
</dbReference>
<dbReference type="GO" id="GO:0005978">
    <property type="term" value="P:glycogen biosynthetic process"/>
    <property type="evidence" value="ECO:0007669"/>
    <property type="project" value="InterPro"/>
</dbReference>
<dbReference type="GO" id="GO:0019252">
    <property type="term" value="P:starch biosynthetic process"/>
    <property type="evidence" value="ECO:0007669"/>
    <property type="project" value="UniProtKB-UniPathway"/>
</dbReference>
<dbReference type="CDD" id="cd02508">
    <property type="entry name" value="ADP_Glucose_PP"/>
    <property type="match status" value="1"/>
</dbReference>
<dbReference type="CDD" id="cd04651">
    <property type="entry name" value="LbH_G1P_AT_C"/>
    <property type="match status" value="1"/>
</dbReference>
<dbReference type="FunFam" id="2.160.10.10:FF:000010">
    <property type="entry name" value="Glucose-1-phosphate adenylyltransferase"/>
    <property type="match status" value="1"/>
</dbReference>
<dbReference type="FunFam" id="3.90.550.10:FF:000030">
    <property type="entry name" value="Glucose-1-phosphate adenylyltransferase"/>
    <property type="match status" value="1"/>
</dbReference>
<dbReference type="Gene3D" id="2.160.10.10">
    <property type="entry name" value="Hexapeptide repeat proteins"/>
    <property type="match status" value="1"/>
</dbReference>
<dbReference type="Gene3D" id="3.90.550.10">
    <property type="entry name" value="Spore Coat Polysaccharide Biosynthesis Protein SpsA, Chain A"/>
    <property type="match status" value="1"/>
</dbReference>
<dbReference type="InterPro" id="IPR011831">
    <property type="entry name" value="ADP-Glc_PPase"/>
</dbReference>
<dbReference type="InterPro" id="IPR005836">
    <property type="entry name" value="ADP_Glu_pyroP_CS"/>
</dbReference>
<dbReference type="InterPro" id="IPR005835">
    <property type="entry name" value="NTP_transferase_dom"/>
</dbReference>
<dbReference type="InterPro" id="IPR029044">
    <property type="entry name" value="Nucleotide-diphossugar_trans"/>
</dbReference>
<dbReference type="InterPro" id="IPR011004">
    <property type="entry name" value="Trimer_LpxA-like_sf"/>
</dbReference>
<dbReference type="NCBIfam" id="TIGR02091">
    <property type="entry name" value="glgC"/>
    <property type="match status" value="1"/>
</dbReference>
<dbReference type="NCBIfam" id="NF002772">
    <property type="entry name" value="PRK02862.1"/>
    <property type="match status" value="1"/>
</dbReference>
<dbReference type="PANTHER" id="PTHR43523:SF7">
    <property type="entry name" value="GLUCOSE-1-PHOSPHATE ADENYLYLTRANSFERASE SMALL SUBUNIT 1, CHLOROPLASTIC_AMYLOPLASTIC"/>
    <property type="match status" value="1"/>
</dbReference>
<dbReference type="PANTHER" id="PTHR43523">
    <property type="entry name" value="GLUCOSE-1-PHOSPHATE ADENYLYLTRANSFERASE-RELATED"/>
    <property type="match status" value="1"/>
</dbReference>
<dbReference type="Pfam" id="PF25247">
    <property type="entry name" value="LbH_GLGC"/>
    <property type="match status" value="1"/>
</dbReference>
<dbReference type="Pfam" id="PF00483">
    <property type="entry name" value="NTP_transferase"/>
    <property type="match status" value="1"/>
</dbReference>
<dbReference type="SUPFAM" id="SSF53448">
    <property type="entry name" value="Nucleotide-diphospho-sugar transferases"/>
    <property type="match status" value="1"/>
</dbReference>
<dbReference type="SUPFAM" id="SSF51161">
    <property type="entry name" value="Trimeric LpxA-like enzymes"/>
    <property type="match status" value="1"/>
</dbReference>
<dbReference type="PROSITE" id="PS00808">
    <property type="entry name" value="ADP_GLC_PYROPHOSPH_1"/>
    <property type="match status" value="1"/>
</dbReference>
<dbReference type="PROSITE" id="PS00809">
    <property type="entry name" value="ADP_GLC_PYROPHOSPH_2"/>
    <property type="match status" value="1"/>
</dbReference>
<dbReference type="PROSITE" id="PS00810">
    <property type="entry name" value="ADP_GLC_PYROPHOSPH_3"/>
    <property type="match status" value="1"/>
</dbReference>
<comment type="function">
    <text evidence="3">Involved in synthesis of starch. Catalyzes the synthesis of ADP-glucose, a molecule that serves as an activated glycosyl donor for alpha-1,4-glucan synthesis. Essential for starch synthesis in leaf chloroplasts and endosperm amyloplasts.</text>
</comment>
<comment type="catalytic activity">
    <reaction evidence="7">
        <text>alpha-D-glucose 1-phosphate + ATP + H(+) = ADP-alpha-D-glucose + diphosphate</text>
        <dbReference type="Rhea" id="RHEA:12120"/>
        <dbReference type="ChEBI" id="CHEBI:15378"/>
        <dbReference type="ChEBI" id="CHEBI:30616"/>
        <dbReference type="ChEBI" id="CHEBI:33019"/>
        <dbReference type="ChEBI" id="CHEBI:57498"/>
        <dbReference type="ChEBI" id="CHEBI:58601"/>
        <dbReference type="EC" id="2.7.7.27"/>
    </reaction>
</comment>
<comment type="activity regulation">
    <text evidence="7">Activated by 3'phosphoglycerate, inhibited by orthophosphate. Allosteric regulation.</text>
</comment>
<comment type="pathway">
    <text evidence="6">Glycan biosynthesis; starch biosynthesis.</text>
</comment>
<comment type="subunit">
    <text evidence="7">Heterotetramer composed of two small and two large subunits.</text>
</comment>
<comment type="subcellular location">
    <subcellularLocation>
        <location evidence="3">Plastid</location>
        <location evidence="3">Chloroplast</location>
    </subcellularLocation>
    <subcellularLocation>
        <location evidence="3">Plastid</location>
        <location evidence="3">Amyloplast</location>
    </subcellularLocation>
</comment>
<comment type="tissue specificity">
    <text evidence="2">Expressed in leaves.</text>
</comment>
<comment type="developmental stage">
    <text evidence="2">Expressed in developing seeds from 10 to 20 days after flowering (DAF).</text>
</comment>
<comment type="induction">
    <text evidence="2">Induced by sucrose, glucose and abscisic acid (ABA).</text>
</comment>
<comment type="similarity">
    <text evidence="6">Belongs to the bacterial/plant glucose-1-phosphate adenylyltransferase family.</text>
</comment>